<dbReference type="EMBL" id="J03632">
    <property type="protein sequence ID" value="AAA49791.1"/>
    <property type="molecule type" value="mRNA"/>
</dbReference>
<dbReference type="PIR" id="B31933">
    <property type="entry name" value="B31933"/>
</dbReference>
<dbReference type="SMR" id="P20957"/>
<dbReference type="Proteomes" id="UP000186698">
    <property type="component" value="Unplaced"/>
</dbReference>
<dbReference type="GO" id="GO:0005576">
    <property type="term" value="C:extracellular region"/>
    <property type="evidence" value="ECO:0007669"/>
    <property type="project" value="UniProtKB-ARBA"/>
</dbReference>
<dbReference type="GO" id="GO:0019814">
    <property type="term" value="C:immunoglobulin complex"/>
    <property type="evidence" value="ECO:0007669"/>
    <property type="project" value="UniProtKB-KW"/>
</dbReference>
<dbReference type="GO" id="GO:0003823">
    <property type="term" value="F:antigen binding"/>
    <property type="evidence" value="ECO:0000318"/>
    <property type="project" value="GO_Central"/>
</dbReference>
<dbReference type="GO" id="GO:0016064">
    <property type="term" value="P:immunoglobulin mediated immune response"/>
    <property type="evidence" value="ECO:0000318"/>
    <property type="project" value="GO_Central"/>
</dbReference>
<dbReference type="CDD" id="cd04981">
    <property type="entry name" value="IgV_H"/>
    <property type="match status" value="1"/>
</dbReference>
<dbReference type="FunFam" id="2.60.40.10:FF:001766">
    <property type="entry name" value="Pre-IgM VH-region (AA-18 to 120)"/>
    <property type="match status" value="1"/>
</dbReference>
<dbReference type="Gene3D" id="2.60.40.10">
    <property type="entry name" value="Immunoglobulins"/>
    <property type="match status" value="1"/>
</dbReference>
<dbReference type="InterPro" id="IPR007110">
    <property type="entry name" value="Ig-like_dom"/>
</dbReference>
<dbReference type="InterPro" id="IPR036179">
    <property type="entry name" value="Ig-like_dom_sf"/>
</dbReference>
<dbReference type="InterPro" id="IPR013783">
    <property type="entry name" value="Ig-like_fold"/>
</dbReference>
<dbReference type="InterPro" id="IPR003599">
    <property type="entry name" value="Ig_sub"/>
</dbReference>
<dbReference type="InterPro" id="IPR013106">
    <property type="entry name" value="Ig_V-set"/>
</dbReference>
<dbReference type="InterPro" id="IPR050199">
    <property type="entry name" value="IgHV"/>
</dbReference>
<dbReference type="PANTHER" id="PTHR23266">
    <property type="entry name" value="IMMUNOGLOBULIN HEAVY CHAIN"/>
    <property type="match status" value="1"/>
</dbReference>
<dbReference type="Pfam" id="PF07686">
    <property type="entry name" value="V-set"/>
    <property type="match status" value="1"/>
</dbReference>
<dbReference type="SMART" id="SM00409">
    <property type="entry name" value="IG"/>
    <property type="match status" value="1"/>
</dbReference>
<dbReference type="SMART" id="SM00406">
    <property type="entry name" value="IGv"/>
    <property type="match status" value="1"/>
</dbReference>
<dbReference type="SUPFAM" id="SSF48726">
    <property type="entry name" value="Immunoglobulin"/>
    <property type="match status" value="1"/>
</dbReference>
<dbReference type="PROSITE" id="PS50835">
    <property type="entry name" value="IG_LIKE"/>
    <property type="match status" value="1"/>
</dbReference>
<keyword id="KW-1064">Adaptive immunity</keyword>
<keyword id="KW-0391">Immunity</keyword>
<keyword id="KW-1280">Immunoglobulin</keyword>
<keyword id="KW-1185">Reference proteome</keyword>
<keyword id="KW-0732">Signal</keyword>
<feature type="signal peptide">
    <location>
        <begin position="1" status="less than"/>
        <end position="18"/>
    </location>
</feature>
<feature type="chain" id="PRO_0000015211" description="Ig heavy chain V region XIG14">
    <location>
        <begin position="19"/>
        <end position="135"/>
    </location>
</feature>
<feature type="domain" description="Ig-like">
    <location>
        <begin position="20"/>
        <end position="128"/>
    </location>
</feature>
<feature type="non-terminal residue">
    <location>
        <position position="1"/>
    </location>
</feature>
<feature type="non-terminal residue">
    <location>
        <position position="135"/>
    </location>
</feature>
<proteinExistence type="evidence at transcript level"/>
<protein>
    <recommendedName>
        <fullName>Ig heavy chain V region XIG14</fullName>
    </recommendedName>
</protein>
<accession>P20957</accession>
<organism>
    <name type="scientific">Xenopus laevis</name>
    <name type="common">African clawed frog</name>
    <dbReference type="NCBI Taxonomy" id="8355"/>
    <lineage>
        <taxon>Eukaryota</taxon>
        <taxon>Metazoa</taxon>
        <taxon>Chordata</taxon>
        <taxon>Craniata</taxon>
        <taxon>Vertebrata</taxon>
        <taxon>Euteleostomi</taxon>
        <taxon>Amphibia</taxon>
        <taxon>Batrachia</taxon>
        <taxon>Anura</taxon>
        <taxon>Pipoidea</taxon>
        <taxon>Pipidae</taxon>
        <taxon>Xenopodinae</taxon>
        <taxon>Xenopus</taxon>
        <taxon>Xenopus</taxon>
    </lineage>
</organism>
<sequence length="135" mass="15080">DFIIFFIFMFFSPSCILSQTLQESGPGTVKPSESLRLTCTVSGFELSSYHMHWIRQPPGKGLEWIGVIATGGSTAIADSLKNRVTITKDNGKKQVYLQMNGMEVKDTAMYYCAREYASGYNFDYWGQGTMVTVTS</sequence>
<name>HV02_XENLA</name>
<reference key="1">
    <citation type="journal article" date="1988" name="Proc. Natl. Acad. Sci. U.S.A.">
        <title>Amino acid sequence of heavy chain from Xenopus laevis IgM deduced from cDNA sequence: implications for evolution of immunoglobulin domains.</title>
        <authorList>
            <person name="Schwager J."/>
            <person name="Mikoryak C.A."/>
            <person name="Steiner L.A."/>
        </authorList>
    </citation>
    <scope>NUCLEOTIDE SEQUENCE [MRNA]</scope>
</reference>